<accession>Q86W33</accession>
<accession>A8MVB8</accession>
<accession>D3DNA9</accession>
<accession>Q8WZ24</accession>
<accession>Q96AJ6</accession>
<accession>Q9P2R4</accession>
<feature type="chain" id="PRO_0000076099" description="Transmembrane protein adipocyte-associated 1">
    <location>
        <begin position="1"/>
        <end position="373"/>
    </location>
</feature>
<feature type="transmembrane region" description="Helical; Name=1" evidence="1">
    <location>
        <begin position="48"/>
        <end position="68"/>
    </location>
</feature>
<feature type="transmembrane region" description="Helical; Name=2" evidence="1">
    <location>
        <begin position="76"/>
        <end position="96"/>
    </location>
</feature>
<feature type="transmembrane region" description="Helical; Name=3" evidence="1">
    <location>
        <begin position="123"/>
        <end position="143"/>
    </location>
</feature>
<feature type="transmembrane region" description="Helical; Name=4" evidence="1">
    <location>
        <begin position="151"/>
        <end position="171"/>
    </location>
</feature>
<feature type="transmembrane region" description="Helical; Name=5" evidence="1">
    <location>
        <begin position="192"/>
        <end position="212"/>
    </location>
</feature>
<feature type="transmembrane region" description="Helical; Name=6" evidence="1">
    <location>
        <begin position="234"/>
        <end position="254"/>
    </location>
</feature>
<feature type="transmembrane region" description="Helical; Name=7" evidence="1">
    <location>
        <begin position="265"/>
        <end position="285"/>
    </location>
</feature>
<feature type="glycosylation site" description="N-linked (GlcNAc...) asparagine" evidence="1">
    <location>
        <position position="11"/>
    </location>
</feature>
<feature type="glycosylation site" description="N-linked (GlcNAc...) asparagine" evidence="1">
    <location>
        <position position="23"/>
    </location>
</feature>
<feature type="glycosylation site" description="N-linked (GlcNAc...) asparagine" evidence="1">
    <location>
        <position position="361"/>
    </location>
</feature>
<feature type="splice variant" id="VSP_016934" description="In isoform 3." evidence="4">
    <original>VYSLVVILPKTPLKERISLPSRRSFYVYAGILALLNLLQGLGSVLLCFDIIEGLCCVDATTFLYFSFFAPLIYVAFLRGFFGSEPKILFS</original>
    <variation>LCRCHNLPVLQLLRSAHLRGFPPGLLRLGAQDPLLLQMPSGRDRGARCTPTPALRCGPAGGPGGCRGCWGLSCQLLEHAVRLCRRGGLPG</variation>
    <location>
        <begin position="204"/>
        <end position="293"/>
    </location>
</feature>
<feature type="splice variant" id="VSP_016932" description="In isoform 2." evidence="3">
    <original>VYSLVVILPKTPLKERISLPSRRSFYVYAGILALLN</original>
    <variation>LGGASTCMRASWHCSTYCRGWGVCCCASTSSRGSAV</variation>
    <location>
        <begin position="204"/>
        <end position="239"/>
    </location>
</feature>
<feature type="splice variant" id="VSP_016933" description="In isoform 2." evidence="3">
    <location>
        <begin position="240"/>
        <end position="373"/>
    </location>
</feature>
<feature type="splice variant" id="VSP_016935" description="In isoform 3." evidence="4">
    <location>
        <begin position="294"/>
        <end position="373"/>
    </location>
</feature>
<feature type="sequence conflict" description="In Ref. 1; BAA89782." evidence="5" ref="1">
    <original>HL</original>
    <variation>TW</variation>
    <location>
        <begin position="141"/>
        <end position="142"/>
    </location>
</feature>
<proteinExistence type="evidence at protein level"/>
<gene>
    <name type="primary">TPRA1</name>
    <name type="synonym">GPR175</name>
    <name type="synonym">TMEM227</name>
    <name type="ORF">PP6566</name>
</gene>
<comment type="interaction">
    <interactant intactId="EBI-16424742">
        <id>Q86W33</id>
    </interactant>
    <interactant intactId="EBI-16423037">
        <id>Q9NZ94-2</id>
        <label>NLGN3</label>
    </interactant>
    <organismsDiffer>false</organismsDiffer>
    <experiments>3</experiments>
</comment>
<comment type="interaction">
    <interactant intactId="EBI-18976295">
        <id>Q86W33-2</id>
    </interactant>
    <interactant intactId="EBI-10178951">
        <id>O00155</id>
        <label>GPR25</label>
    </interactant>
    <organismsDiffer>false</organismsDiffer>
    <experiments>3</experiments>
</comment>
<comment type="subcellular location">
    <subcellularLocation>
        <location>Membrane</location>
        <topology>Multi-pass membrane protein</topology>
    </subcellularLocation>
</comment>
<comment type="alternative products">
    <event type="alternative splicing"/>
    <isoform>
        <id>Q86W33-1</id>
        <name>1</name>
        <sequence type="displayed"/>
    </isoform>
    <isoform>
        <id>Q86W33-2</id>
        <name>2</name>
        <sequence type="described" ref="VSP_016932 VSP_016933"/>
    </isoform>
    <isoform>
        <id>Q86W33-3</id>
        <name>3</name>
        <sequence type="described" ref="VSP_016934 VSP_016935"/>
    </isoform>
</comment>
<comment type="tissue specificity">
    <text evidence="2">Ubiquitous, with higher levels in heart, placenta and kidney.</text>
</comment>
<comment type="similarity">
    <text evidence="5">Belongs to the UPF0359 family.</text>
</comment>
<organism>
    <name type="scientific">Homo sapiens</name>
    <name type="common">Human</name>
    <dbReference type="NCBI Taxonomy" id="9606"/>
    <lineage>
        <taxon>Eukaryota</taxon>
        <taxon>Metazoa</taxon>
        <taxon>Chordata</taxon>
        <taxon>Craniata</taxon>
        <taxon>Vertebrata</taxon>
        <taxon>Euteleostomi</taxon>
        <taxon>Mammalia</taxon>
        <taxon>Eutheria</taxon>
        <taxon>Euarchontoglires</taxon>
        <taxon>Primates</taxon>
        <taxon>Haplorrhini</taxon>
        <taxon>Catarrhini</taxon>
        <taxon>Hominidae</taxon>
        <taxon>Homo</taxon>
    </lineage>
</organism>
<protein>
    <recommendedName>
        <fullName>Transmembrane protein adipocyte-associated 1</fullName>
    </recommendedName>
    <alternativeName>
        <fullName>Integral membrane protein GPR175</fullName>
    </alternativeName>
    <alternativeName>
        <fullName>Transmembrane protein 227</fullName>
    </alternativeName>
</protein>
<name>TPRA1_HUMAN</name>
<sequence>MDTLEEVTWANGSTALPPPLAPNISVPHRCLLLLYEDIGTSRVRYWDLLLLIPNVLFLIFLLWKLPSARAKIRITSSPIFITFYILVFVVALVGIARAVVSMTVSTSNAATVADKILWEITRFFLLAIELSVIILGLAFGHLESKSSIKRVLAITTVLSLAYSVTQGTLEILYPDAHLSAEDFNIYGHGGRQFWLVSSCFFFLVYSLVVILPKTPLKERISLPSRRSFYVYAGILALLNLLQGLGSVLLCFDIIEGLCCVDATTFLYFSFFAPLIYVAFLRGFFGSEPKILFSYKCQVDETEEPDVHLPQPYAVARREGLEAAGAAGASAASYSSTQFDSAGGVAYLDDIASMPCHTGSINSTDSERWKAINA</sequence>
<reference key="1">
    <citation type="submission" date="2000-01" db="EMBL/GenBank/DDBJ databases">
        <title>Seven transmembrane domain orphan receptor.</title>
        <authorList>
            <person name="Saito T."/>
            <person name="Seki N."/>
        </authorList>
    </citation>
    <scope>NUCLEOTIDE SEQUENCE [MRNA] (ISOFORM 1)</scope>
    <source>
        <tissue>Fetal brain</tissue>
    </source>
</reference>
<reference key="2">
    <citation type="journal article" date="2004" name="Proc. Natl. Acad. Sci. U.S.A.">
        <title>Large-scale cDNA transfection screening for genes related to cancer development and progression.</title>
        <authorList>
            <person name="Wan D."/>
            <person name="Gong Y."/>
            <person name="Qin W."/>
            <person name="Zhang P."/>
            <person name="Li J."/>
            <person name="Wei L."/>
            <person name="Zhou X."/>
            <person name="Li H."/>
            <person name="Qiu X."/>
            <person name="Zhong F."/>
            <person name="He L."/>
            <person name="Yu J."/>
            <person name="Yao G."/>
            <person name="Jiang H."/>
            <person name="Qian L."/>
            <person name="Yu Y."/>
            <person name="Shu H."/>
            <person name="Chen X."/>
            <person name="Xu H."/>
            <person name="Guo M."/>
            <person name="Pan Z."/>
            <person name="Chen Y."/>
            <person name="Ge C."/>
            <person name="Yang S."/>
            <person name="Gu J."/>
        </authorList>
    </citation>
    <scope>NUCLEOTIDE SEQUENCE [LARGE SCALE MRNA] (ISOFORM 3)</scope>
</reference>
<reference key="3">
    <citation type="journal article" date="2006" name="Nature">
        <title>The DNA sequence, annotation and analysis of human chromosome 3.</title>
        <authorList>
            <person name="Muzny D.M."/>
            <person name="Scherer S.E."/>
            <person name="Kaul R."/>
            <person name="Wang J."/>
            <person name="Yu J."/>
            <person name="Sudbrak R."/>
            <person name="Buhay C.J."/>
            <person name="Chen R."/>
            <person name="Cree A."/>
            <person name="Ding Y."/>
            <person name="Dugan-Rocha S."/>
            <person name="Gill R."/>
            <person name="Gunaratne P."/>
            <person name="Harris R.A."/>
            <person name="Hawes A.C."/>
            <person name="Hernandez J."/>
            <person name="Hodgson A.V."/>
            <person name="Hume J."/>
            <person name="Jackson A."/>
            <person name="Khan Z.M."/>
            <person name="Kovar-Smith C."/>
            <person name="Lewis L.R."/>
            <person name="Lozado R.J."/>
            <person name="Metzker M.L."/>
            <person name="Milosavljevic A."/>
            <person name="Miner G.R."/>
            <person name="Morgan M.B."/>
            <person name="Nazareth L.V."/>
            <person name="Scott G."/>
            <person name="Sodergren E."/>
            <person name="Song X.-Z."/>
            <person name="Steffen D."/>
            <person name="Wei S."/>
            <person name="Wheeler D.A."/>
            <person name="Wright M.W."/>
            <person name="Worley K.C."/>
            <person name="Yuan Y."/>
            <person name="Zhang Z."/>
            <person name="Adams C.Q."/>
            <person name="Ansari-Lari M.A."/>
            <person name="Ayele M."/>
            <person name="Brown M.J."/>
            <person name="Chen G."/>
            <person name="Chen Z."/>
            <person name="Clendenning J."/>
            <person name="Clerc-Blankenburg K.P."/>
            <person name="Chen R."/>
            <person name="Chen Z."/>
            <person name="Davis C."/>
            <person name="Delgado O."/>
            <person name="Dinh H.H."/>
            <person name="Dong W."/>
            <person name="Draper H."/>
            <person name="Ernst S."/>
            <person name="Fu G."/>
            <person name="Gonzalez-Garay M.L."/>
            <person name="Garcia D.K."/>
            <person name="Gillett W."/>
            <person name="Gu J."/>
            <person name="Hao B."/>
            <person name="Haugen E."/>
            <person name="Havlak P."/>
            <person name="He X."/>
            <person name="Hennig S."/>
            <person name="Hu S."/>
            <person name="Huang W."/>
            <person name="Jackson L.R."/>
            <person name="Jacob L.S."/>
            <person name="Kelly S.H."/>
            <person name="Kube M."/>
            <person name="Levy R."/>
            <person name="Li Z."/>
            <person name="Liu B."/>
            <person name="Liu J."/>
            <person name="Liu W."/>
            <person name="Lu J."/>
            <person name="Maheshwari M."/>
            <person name="Nguyen B.-V."/>
            <person name="Okwuonu G.O."/>
            <person name="Palmeiri A."/>
            <person name="Pasternak S."/>
            <person name="Perez L.M."/>
            <person name="Phelps K.A."/>
            <person name="Plopper F.J."/>
            <person name="Qiang B."/>
            <person name="Raymond C."/>
            <person name="Rodriguez R."/>
            <person name="Saenphimmachak C."/>
            <person name="Santibanez J."/>
            <person name="Shen H."/>
            <person name="Shen Y."/>
            <person name="Subramanian S."/>
            <person name="Tabor P.E."/>
            <person name="Verduzco D."/>
            <person name="Waldron L."/>
            <person name="Wang J."/>
            <person name="Wang J."/>
            <person name="Wang Q."/>
            <person name="Williams G.A."/>
            <person name="Wong G.K.-S."/>
            <person name="Yao Z."/>
            <person name="Zhang J."/>
            <person name="Zhang X."/>
            <person name="Zhao G."/>
            <person name="Zhou J."/>
            <person name="Zhou Y."/>
            <person name="Nelson D."/>
            <person name="Lehrach H."/>
            <person name="Reinhardt R."/>
            <person name="Naylor S.L."/>
            <person name="Yang H."/>
            <person name="Olson M."/>
            <person name="Weinstock G."/>
            <person name="Gibbs R.A."/>
        </authorList>
    </citation>
    <scope>NUCLEOTIDE SEQUENCE [LARGE SCALE GENOMIC DNA]</scope>
</reference>
<reference key="4">
    <citation type="submission" date="2005-09" db="EMBL/GenBank/DDBJ databases">
        <authorList>
            <person name="Mural R.J."/>
            <person name="Istrail S."/>
            <person name="Sutton G.G."/>
            <person name="Florea L."/>
            <person name="Halpern A.L."/>
            <person name="Mobarry C.M."/>
            <person name="Lippert R."/>
            <person name="Walenz B."/>
            <person name="Shatkay H."/>
            <person name="Dew I."/>
            <person name="Miller J.R."/>
            <person name="Flanigan M.J."/>
            <person name="Edwards N.J."/>
            <person name="Bolanos R."/>
            <person name="Fasulo D."/>
            <person name="Halldorsson B.V."/>
            <person name="Hannenhalli S."/>
            <person name="Turner R."/>
            <person name="Yooseph S."/>
            <person name="Lu F."/>
            <person name="Nusskern D.R."/>
            <person name="Shue B.C."/>
            <person name="Zheng X.H."/>
            <person name="Zhong F."/>
            <person name="Delcher A.L."/>
            <person name="Huson D.H."/>
            <person name="Kravitz S.A."/>
            <person name="Mouchard L."/>
            <person name="Reinert K."/>
            <person name="Remington K.A."/>
            <person name="Clark A.G."/>
            <person name="Waterman M.S."/>
            <person name="Eichler E.E."/>
            <person name="Adams M.D."/>
            <person name="Hunkapiller M.W."/>
            <person name="Myers E.W."/>
            <person name="Venter J.C."/>
        </authorList>
    </citation>
    <scope>NUCLEOTIDE SEQUENCE [LARGE SCALE GENOMIC DNA]</scope>
</reference>
<reference key="5">
    <citation type="journal article" date="2004" name="Genome Res.">
        <title>The status, quality, and expansion of the NIH full-length cDNA project: the Mammalian Gene Collection (MGC).</title>
        <authorList>
            <consortium name="The MGC Project Team"/>
        </authorList>
    </citation>
    <scope>NUCLEOTIDE SEQUENCE [LARGE SCALE MRNA] (ISOFORMS 1 AND 2)</scope>
    <source>
        <tissue>Pancreas</tissue>
        <tissue>Skin</tissue>
    </source>
</reference>
<reference key="6">
    <citation type="journal article" date="1999" name="Endocrinology">
        <title>Differential expression of a novel seven transmembrane domain protein in epididymal fat from aged and diabetic mice.</title>
        <authorList>
            <person name="Yang H."/>
            <person name="Egan J.M."/>
            <person name="Rodgers B.D."/>
            <person name="Bernier M."/>
            <person name="Montrose-Rafizadeh C."/>
        </authorList>
    </citation>
    <scope>TISSUE SPECIFICITY</scope>
    <source>
        <tissue>Adipocyte</tissue>
    </source>
</reference>
<dbReference type="EMBL" id="AB037108">
    <property type="protein sequence ID" value="BAA89782.1"/>
    <property type="molecule type" value="mRNA"/>
</dbReference>
<dbReference type="EMBL" id="AF289568">
    <property type="protein sequence ID" value="AAL55752.1"/>
    <property type="molecule type" value="mRNA"/>
</dbReference>
<dbReference type="EMBL" id="AC023593">
    <property type="status" value="NOT_ANNOTATED_CDS"/>
    <property type="molecule type" value="Genomic_DNA"/>
</dbReference>
<dbReference type="EMBL" id="AC084035">
    <property type="status" value="NOT_ANNOTATED_CDS"/>
    <property type="molecule type" value="Genomic_DNA"/>
</dbReference>
<dbReference type="EMBL" id="CH471052">
    <property type="protein sequence ID" value="EAW79343.1"/>
    <property type="molecule type" value="Genomic_DNA"/>
</dbReference>
<dbReference type="EMBL" id="CH471052">
    <property type="protein sequence ID" value="EAW79344.1"/>
    <property type="molecule type" value="Genomic_DNA"/>
</dbReference>
<dbReference type="EMBL" id="BC017058">
    <property type="protein sequence ID" value="AAH17058.1"/>
    <property type="molecule type" value="mRNA"/>
</dbReference>
<dbReference type="EMBL" id="BC050711">
    <property type="protein sequence ID" value="AAH50711.1"/>
    <property type="molecule type" value="mRNA"/>
</dbReference>
<dbReference type="CCDS" id="CCDS3042.1">
    <molecule id="Q86W33-1"/>
</dbReference>
<dbReference type="CCDS" id="CCDS46899.1">
    <molecule id="Q86W33-3"/>
</dbReference>
<dbReference type="RefSeq" id="NP_001129525.1">
    <molecule id="Q86W33-1"/>
    <property type="nucleotide sequence ID" value="NM_001136053.4"/>
</dbReference>
<dbReference type="RefSeq" id="NP_001136118.1">
    <molecule id="Q86W33-3"/>
    <property type="nucleotide sequence ID" value="NM_001142646.4"/>
</dbReference>
<dbReference type="RefSeq" id="NP_001339930.1">
    <molecule id="Q86W33-1"/>
    <property type="nucleotide sequence ID" value="NM_001353001.2"/>
</dbReference>
<dbReference type="RefSeq" id="NP_001339931.1">
    <molecule id="Q86W33-1"/>
    <property type="nucleotide sequence ID" value="NM_001353002.2"/>
</dbReference>
<dbReference type="RefSeq" id="NP_001339932.1">
    <molecule id="Q86W33-1"/>
    <property type="nucleotide sequence ID" value="NM_001353003.2"/>
</dbReference>
<dbReference type="RefSeq" id="NP_001339933.1">
    <molecule id="Q86W33-1"/>
    <property type="nucleotide sequence ID" value="NM_001353004.2"/>
</dbReference>
<dbReference type="RefSeq" id="NP_001339934.1">
    <molecule id="Q86W33-1"/>
    <property type="nucleotide sequence ID" value="NM_001353005.2"/>
</dbReference>
<dbReference type="RefSeq" id="XP_006713558.1">
    <property type="nucleotide sequence ID" value="XM_006713495.3"/>
</dbReference>
<dbReference type="RefSeq" id="XP_006713559.1">
    <molecule id="Q86W33-1"/>
    <property type="nucleotide sequence ID" value="XM_006713496.4"/>
</dbReference>
<dbReference type="RefSeq" id="XP_006713560.1">
    <property type="nucleotide sequence ID" value="XM_006713497.3"/>
</dbReference>
<dbReference type="RefSeq" id="XP_011510724.1">
    <property type="nucleotide sequence ID" value="XM_011512422.1"/>
</dbReference>
<dbReference type="RefSeq" id="XP_016861196.1">
    <property type="nucleotide sequence ID" value="XM_017005707.1"/>
</dbReference>
<dbReference type="RefSeq" id="XP_016861197.1">
    <property type="nucleotide sequence ID" value="XM_017005708.1"/>
</dbReference>
<dbReference type="RefSeq" id="XP_047303399.1">
    <molecule id="Q86W33-1"/>
    <property type="nucleotide sequence ID" value="XM_047447443.1"/>
</dbReference>
<dbReference type="RefSeq" id="XP_047303400.1">
    <molecule id="Q86W33-1"/>
    <property type="nucleotide sequence ID" value="XM_047447444.1"/>
</dbReference>
<dbReference type="RefSeq" id="XP_054201204.1">
    <molecule id="Q86W33-1"/>
    <property type="nucleotide sequence ID" value="XM_054345229.1"/>
</dbReference>
<dbReference type="RefSeq" id="XP_054201205.1">
    <molecule id="Q86W33-1"/>
    <property type="nucleotide sequence ID" value="XM_054345230.1"/>
</dbReference>
<dbReference type="RefSeq" id="XP_054201206.1">
    <molecule id="Q86W33-1"/>
    <property type="nucleotide sequence ID" value="XM_054345231.1"/>
</dbReference>
<dbReference type="BioGRID" id="126289">
    <property type="interactions" value="47"/>
</dbReference>
<dbReference type="FunCoup" id="Q86W33">
    <property type="interactions" value="522"/>
</dbReference>
<dbReference type="IntAct" id="Q86W33">
    <property type="interactions" value="28"/>
</dbReference>
<dbReference type="STRING" id="9606.ENSP00000498161"/>
<dbReference type="GlyCosmos" id="Q86W33">
    <property type="glycosylation" value="3 sites, No reported glycans"/>
</dbReference>
<dbReference type="GlyGen" id="Q86W33">
    <property type="glycosylation" value="3 sites"/>
</dbReference>
<dbReference type="iPTMnet" id="Q86W33"/>
<dbReference type="PhosphoSitePlus" id="Q86W33"/>
<dbReference type="BioMuta" id="TPRA1"/>
<dbReference type="DMDM" id="74727643"/>
<dbReference type="jPOST" id="Q86W33"/>
<dbReference type="MassIVE" id="Q86W33"/>
<dbReference type="PaxDb" id="9606-ENSP00000347748"/>
<dbReference type="PeptideAtlas" id="Q86W33"/>
<dbReference type="ProteomicsDB" id="70108">
    <molecule id="Q86W33-1"/>
</dbReference>
<dbReference type="ProteomicsDB" id="70109">
    <molecule id="Q86W33-2"/>
</dbReference>
<dbReference type="ProteomicsDB" id="70110">
    <molecule id="Q86W33-3"/>
</dbReference>
<dbReference type="Antibodypedia" id="17215">
    <property type="antibodies" value="282 antibodies from 30 providers"/>
</dbReference>
<dbReference type="DNASU" id="131601"/>
<dbReference type="Ensembl" id="ENST00000296210.11">
    <molecule id="Q86W33-3"/>
    <property type="protein sequence ID" value="ENSP00000296210.7"/>
    <property type="gene ID" value="ENSG00000163870.16"/>
</dbReference>
<dbReference type="Ensembl" id="ENST00000355552.8">
    <molecule id="Q86W33-1"/>
    <property type="protein sequence ID" value="ENSP00000347748.3"/>
    <property type="gene ID" value="ENSG00000163870.16"/>
</dbReference>
<dbReference type="Ensembl" id="ENST00000393400.6">
    <molecule id="Q86W33-2"/>
    <property type="protein sequence ID" value="ENSP00000377056.2"/>
    <property type="gene ID" value="ENSG00000163870.16"/>
</dbReference>
<dbReference type="Ensembl" id="ENST00000450633.6">
    <molecule id="Q86W33-1"/>
    <property type="protein sequence ID" value="ENSP00000413428.2"/>
    <property type="gene ID" value="ENSG00000163870.16"/>
</dbReference>
<dbReference type="Ensembl" id="ENST00000489960.5">
    <molecule id="Q86W33-1"/>
    <property type="protein sequence ID" value="ENSP00000418298.1"/>
    <property type="gene ID" value="ENSG00000163870.16"/>
</dbReference>
<dbReference type="Ensembl" id="ENST00000648957.1">
    <molecule id="Q86W33-1"/>
    <property type="protein sequence ID" value="ENSP00000498161.1"/>
    <property type="gene ID" value="ENSG00000163870.16"/>
</dbReference>
<dbReference type="GeneID" id="131601"/>
<dbReference type="KEGG" id="hsa:131601"/>
<dbReference type="MANE-Select" id="ENST00000355552.8">
    <property type="protein sequence ID" value="ENSP00000347748.3"/>
    <property type="RefSeq nucleotide sequence ID" value="NM_001136053.4"/>
    <property type="RefSeq protein sequence ID" value="NP_001129525.1"/>
</dbReference>
<dbReference type="UCSC" id="uc003ejn.4">
    <molecule id="Q86W33-1"/>
    <property type="organism name" value="human"/>
</dbReference>
<dbReference type="AGR" id="HGNC:30413"/>
<dbReference type="CTD" id="131601"/>
<dbReference type="DisGeNET" id="131601"/>
<dbReference type="GeneCards" id="TPRA1"/>
<dbReference type="HGNC" id="HGNC:30413">
    <property type="gene designation" value="TPRA1"/>
</dbReference>
<dbReference type="HPA" id="ENSG00000163870">
    <property type="expression patterns" value="Low tissue specificity"/>
</dbReference>
<dbReference type="MIM" id="608336">
    <property type="type" value="gene"/>
</dbReference>
<dbReference type="neXtProt" id="NX_Q86W33"/>
<dbReference type="OpenTargets" id="ENSG00000163870"/>
<dbReference type="PharmGKB" id="PA165698543"/>
<dbReference type="VEuPathDB" id="HostDB:ENSG00000163870"/>
<dbReference type="eggNOG" id="KOG4536">
    <property type="taxonomic scope" value="Eukaryota"/>
</dbReference>
<dbReference type="GeneTree" id="ENSGT00390000016807"/>
<dbReference type="HOGENOM" id="CLU_056255_0_0_1"/>
<dbReference type="InParanoid" id="Q86W33"/>
<dbReference type="OMA" id="DRWKSIN"/>
<dbReference type="OrthoDB" id="10027388at2759"/>
<dbReference type="PAN-GO" id="Q86W33">
    <property type="GO annotations" value="3 GO annotations based on evolutionary models"/>
</dbReference>
<dbReference type="PhylomeDB" id="Q86W33"/>
<dbReference type="TreeFam" id="TF314072"/>
<dbReference type="PathwayCommons" id="Q86W33"/>
<dbReference type="SignaLink" id="Q86W33"/>
<dbReference type="BioGRID-ORCS" id="131601">
    <property type="hits" value="12 hits in 1154 CRISPR screens"/>
</dbReference>
<dbReference type="ChiTaRS" id="TPRA1">
    <property type="organism name" value="human"/>
</dbReference>
<dbReference type="GenomeRNAi" id="131601"/>
<dbReference type="Pharos" id="Q86W33">
    <property type="development level" value="Tbio"/>
</dbReference>
<dbReference type="PRO" id="PR:Q86W33"/>
<dbReference type="Proteomes" id="UP000005640">
    <property type="component" value="Chromosome 3"/>
</dbReference>
<dbReference type="RNAct" id="Q86W33">
    <property type="molecule type" value="protein"/>
</dbReference>
<dbReference type="Bgee" id="ENSG00000163870">
    <property type="expression patterns" value="Expressed in lower esophagus mucosa and 156 other cell types or tissues"/>
</dbReference>
<dbReference type="ExpressionAtlas" id="Q86W33">
    <property type="expression patterns" value="baseline and differential"/>
</dbReference>
<dbReference type="GO" id="GO:0016020">
    <property type="term" value="C:membrane"/>
    <property type="evidence" value="ECO:0000304"/>
    <property type="project" value="ProtInc"/>
</dbReference>
<dbReference type="GO" id="GO:0005886">
    <property type="term" value="C:plasma membrane"/>
    <property type="evidence" value="ECO:0000318"/>
    <property type="project" value="GO_Central"/>
</dbReference>
<dbReference type="GO" id="GO:0004930">
    <property type="term" value="F:G protein-coupled receptor activity"/>
    <property type="evidence" value="ECO:0000318"/>
    <property type="project" value="GO_Central"/>
</dbReference>
<dbReference type="GO" id="GO:0040016">
    <property type="term" value="P:embryonic cleavage"/>
    <property type="evidence" value="ECO:0007669"/>
    <property type="project" value="Ensembl"/>
</dbReference>
<dbReference type="GO" id="GO:0007186">
    <property type="term" value="P:G protein-coupled receptor signaling pathway"/>
    <property type="evidence" value="ECO:0000318"/>
    <property type="project" value="GO_Central"/>
</dbReference>
<dbReference type="GO" id="GO:0006629">
    <property type="term" value="P:lipid metabolic process"/>
    <property type="evidence" value="ECO:0000304"/>
    <property type="project" value="ProtInc"/>
</dbReference>
<dbReference type="GO" id="GO:1901991">
    <property type="term" value="P:negative regulation of mitotic cell cycle phase transition"/>
    <property type="evidence" value="ECO:0007669"/>
    <property type="project" value="Ensembl"/>
</dbReference>
<dbReference type="InterPro" id="IPR018781">
    <property type="entry name" value="TPRA1/CAND2/CAND8"/>
</dbReference>
<dbReference type="PANTHER" id="PTHR15876">
    <property type="entry name" value="TRANSMEMBRANE PROTEIN ADIPOCYTE-ASSOCIATED 1"/>
    <property type="match status" value="1"/>
</dbReference>
<dbReference type="PANTHER" id="PTHR15876:SF8">
    <property type="entry name" value="TRANSMEMBRANE PROTEIN ADIPOCYTE-ASSOCIATED 1"/>
    <property type="match status" value="1"/>
</dbReference>
<dbReference type="Pfam" id="PF10160">
    <property type="entry name" value="Tmemb_40"/>
    <property type="match status" value="1"/>
</dbReference>
<evidence type="ECO:0000255" key="1"/>
<evidence type="ECO:0000269" key="2">
    <source>
    </source>
</evidence>
<evidence type="ECO:0000303" key="3">
    <source>
    </source>
</evidence>
<evidence type="ECO:0000303" key="4">
    <source>
    </source>
</evidence>
<evidence type="ECO:0000305" key="5"/>
<keyword id="KW-0025">Alternative splicing</keyword>
<keyword id="KW-0325">Glycoprotein</keyword>
<keyword id="KW-0472">Membrane</keyword>
<keyword id="KW-1267">Proteomics identification</keyword>
<keyword id="KW-1185">Reference proteome</keyword>
<keyword id="KW-0812">Transmembrane</keyword>
<keyword id="KW-1133">Transmembrane helix</keyword>